<proteinExistence type="evidence at protein level"/>
<accession>P9WMD7</accession>
<accession>L0T6E6</accession>
<accession>P67432</accession>
<accession>P71822</accession>
<reference key="1">
    <citation type="journal article" date="1998" name="Nature">
        <title>Deciphering the biology of Mycobacterium tuberculosis from the complete genome sequence.</title>
        <authorList>
            <person name="Cole S.T."/>
            <person name="Brosch R."/>
            <person name="Parkhill J."/>
            <person name="Garnier T."/>
            <person name="Churcher C.M."/>
            <person name="Harris D.E."/>
            <person name="Gordon S.V."/>
            <person name="Eiglmeier K."/>
            <person name="Gas S."/>
            <person name="Barry C.E. III"/>
            <person name="Tekaia F."/>
            <person name="Badcock K."/>
            <person name="Basham D."/>
            <person name="Brown D."/>
            <person name="Chillingworth T."/>
            <person name="Connor R."/>
            <person name="Davies R.M."/>
            <person name="Devlin K."/>
            <person name="Feltwell T."/>
            <person name="Gentles S."/>
            <person name="Hamlin N."/>
            <person name="Holroyd S."/>
            <person name="Hornsby T."/>
            <person name="Jagels K."/>
            <person name="Krogh A."/>
            <person name="McLean J."/>
            <person name="Moule S."/>
            <person name="Murphy L.D."/>
            <person name="Oliver S."/>
            <person name="Osborne J."/>
            <person name="Quail M.A."/>
            <person name="Rajandream M.A."/>
            <person name="Rogers J."/>
            <person name="Rutter S."/>
            <person name="Seeger K."/>
            <person name="Skelton S."/>
            <person name="Squares S."/>
            <person name="Squares R."/>
            <person name="Sulston J.E."/>
            <person name="Taylor K."/>
            <person name="Whitehead S."/>
            <person name="Barrell B.G."/>
        </authorList>
    </citation>
    <scope>NUCLEOTIDE SEQUENCE [LARGE SCALE GENOMIC DNA]</scope>
    <source>
        <strain>ATCC 25618 / H37Rv</strain>
    </source>
</reference>
<reference key="2">
    <citation type="journal article" date="2011" name="Mol. Cell. Proteomics">
        <title>Proteogenomic analysis of Mycobacterium tuberculosis by high resolution mass spectrometry.</title>
        <authorList>
            <person name="Kelkar D.S."/>
            <person name="Kumar D."/>
            <person name="Kumar P."/>
            <person name="Balakrishnan L."/>
            <person name="Muthusamy B."/>
            <person name="Yadav A.K."/>
            <person name="Shrivastava P."/>
            <person name="Marimuthu A."/>
            <person name="Anand S."/>
            <person name="Sundaram H."/>
            <person name="Kingsbury R."/>
            <person name="Harsha H.C."/>
            <person name="Nair B."/>
            <person name="Prasad T.S."/>
            <person name="Chauhan D.S."/>
            <person name="Katoch K."/>
            <person name="Katoch V.M."/>
            <person name="Kumar P."/>
            <person name="Chaerkady R."/>
            <person name="Ramachandran S."/>
            <person name="Dash D."/>
            <person name="Pandey A."/>
        </authorList>
    </citation>
    <scope>IDENTIFICATION BY MASS SPECTROMETRY [LARGE SCALE ANALYSIS]</scope>
    <source>
        <strain>ATCC 25618 / H37Rv</strain>
    </source>
</reference>
<organism>
    <name type="scientific">Mycobacterium tuberculosis (strain ATCC 25618 / H37Rv)</name>
    <dbReference type="NCBI Taxonomy" id="83332"/>
    <lineage>
        <taxon>Bacteria</taxon>
        <taxon>Bacillati</taxon>
        <taxon>Actinomycetota</taxon>
        <taxon>Actinomycetes</taxon>
        <taxon>Mycobacteriales</taxon>
        <taxon>Mycobacteriaceae</taxon>
        <taxon>Mycobacterium</taxon>
        <taxon>Mycobacterium tuberculosis complex</taxon>
    </lineage>
</organism>
<evidence type="ECO:0000255" key="1">
    <source>
        <dbReference type="PROSITE-ProRule" id="PRU00335"/>
    </source>
</evidence>
<evidence type="ECO:0000256" key="2">
    <source>
        <dbReference type="SAM" id="MobiDB-lite"/>
    </source>
</evidence>
<protein>
    <recommendedName>
        <fullName>Uncharacterized HTH-type transcriptional regulator Rv0767c</fullName>
    </recommendedName>
</protein>
<keyword id="KW-0238">DNA-binding</keyword>
<keyword id="KW-1185">Reference proteome</keyword>
<keyword id="KW-0677">Repeat</keyword>
<keyword id="KW-0804">Transcription</keyword>
<keyword id="KW-0805">Transcription regulation</keyword>
<sequence length="213" mass="22572">MSSDVLVTTPAQRQTEPHAEAVSRNRRQQATFRKVLAAAMATLREKSYADLTVRLVAARAKVAPATAYTYFSSKNHLIAEVYLDLVRQVPCVTDVNVPMPIRVTSSLRHLALVVADEPEIGAACTAALLDGGADPAVRAVRDRIGAEIHRRITSAIGPGADPGTVFALEMAFFGALVQAGSGTFTYHEIADRLGYVVGLILAGANEPSTGGSE</sequence>
<dbReference type="EMBL" id="AL123456">
    <property type="protein sequence ID" value="CCP43514.1"/>
    <property type="molecule type" value="Genomic_DNA"/>
</dbReference>
<dbReference type="PIR" id="B70707">
    <property type="entry name" value="B70707"/>
</dbReference>
<dbReference type="RefSeq" id="NP_215281.1">
    <property type="nucleotide sequence ID" value="NC_000962.3"/>
</dbReference>
<dbReference type="RefSeq" id="WP_003403915.1">
    <property type="nucleotide sequence ID" value="NZ_NVQJ01000035.1"/>
</dbReference>
<dbReference type="SMR" id="P9WMD7"/>
<dbReference type="STRING" id="83332.Rv0767c"/>
<dbReference type="PaxDb" id="83332-Rv0767c"/>
<dbReference type="DNASU" id="888833"/>
<dbReference type="GeneID" id="888833"/>
<dbReference type="KEGG" id="mtu:Rv0767c"/>
<dbReference type="KEGG" id="mtv:RVBD_0767c"/>
<dbReference type="TubercuList" id="Rv0767c"/>
<dbReference type="eggNOG" id="COG1309">
    <property type="taxonomic scope" value="Bacteria"/>
</dbReference>
<dbReference type="InParanoid" id="P9WMD7"/>
<dbReference type="OrthoDB" id="3476820at2"/>
<dbReference type="Proteomes" id="UP000001584">
    <property type="component" value="Chromosome"/>
</dbReference>
<dbReference type="GO" id="GO:0003700">
    <property type="term" value="F:DNA-binding transcription factor activity"/>
    <property type="evidence" value="ECO:0000318"/>
    <property type="project" value="GO_Central"/>
</dbReference>
<dbReference type="GO" id="GO:0000976">
    <property type="term" value="F:transcription cis-regulatory region binding"/>
    <property type="evidence" value="ECO:0000318"/>
    <property type="project" value="GO_Central"/>
</dbReference>
<dbReference type="GO" id="GO:0006355">
    <property type="term" value="P:regulation of DNA-templated transcription"/>
    <property type="evidence" value="ECO:0000318"/>
    <property type="project" value="GO_Central"/>
</dbReference>
<dbReference type="Gene3D" id="1.10.357.10">
    <property type="entry name" value="Tetracycline Repressor, domain 2"/>
    <property type="match status" value="1"/>
</dbReference>
<dbReference type="InterPro" id="IPR023772">
    <property type="entry name" value="DNA-bd_HTH_TetR-type_CS"/>
</dbReference>
<dbReference type="InterPro" id="IPR009057">
    <property type="entry name" value="Homeodomain-like_sf"/>
</dbReference>
<dbReference type="InterPro" id="IPR050109">
    <property type="entry name" value="HTH-type_TetR-like_transc_reg"/>
</dbReference>
<dbReference type="InterPro" id="IPR001647">
    <property type="entry name" value="HTH_TetR"/>
</dbReference>
<dbReference type="PANTHER" id="PTHR30055:SF234">
    <property type="entry name" value="HTH-TYPE TRANSCRIPTIONAL REGULATOR BETI"/>
    <property type="match status" value="1"/>
</dbReference>
<dbReference type="PANTHER" id="PTHR30055">
    <property type="entry name" value="HTH-TYPE TRANSCRIPTIONAL REGULATOR RUTR"/>
    <property type="match status" value="1"/>
</dbReference>
<dbReference type="Pfam" id="PF00440">
    <property type="entry name" value="TetR_N"/>
    <property type="match status" value="1"/>
</dbReference>
<dbReference type="PRINTS" id="PR00455">
    <property type="entry name" value="HTHTETR"/>
</dbReference>
<dbReference type="SUPFAM" id="SSF46689">
    <property type="entry name" value="Homeodomain-like"/>
    <property type="match status" value="1"/>
</dbReference>
<dbReference type="PROSITE" id="PS01081">
    <property type="entry name" value="HTH_TETR_1"/>
    <property type="match status" value="1"/>
</dbReference>
<dbReference type="PROSITE" id="PS50977">
    <property type="entry name" value="HTH_TETR_2"/>
    <property type="match status" value="1"/>
</dbReference>
<feature type="chain" id="PRO_0000070659" description="Uncharacterized HTH-type transcriptional regulator Rv0767c">
    <location>
        <begin position="1"/>
        <end position="213"/>
    </location>
</feature>
<feature type="domain" description="HTH tetR-type" evidence="1">
    <location>
        <begin position="29"/>
        <end position="89"/>
    </location>
</feature>
<feature type="region of interest" description="Disordered" evidence="2">
    <location>
        <begin position="1"/>
        <end position="26"/>
    </location>
</feature>
<feature type="compositionally biased region" description="Polar residues" evidence="2">
    <location>
        <begin position="1"/>
        <end position="14"/>
    </location>
</feature>
<name>Y767_MYCTU</name>
<gene>
    <name type="ordered locus">Rv0767c</name>
    <name type="ORF">MTCY369.12c</name>
</gene>